<proteinExistence type="inferred from homology"/>
<gene>
    <name evidence="1" type="primary">pagP</name>
    <name type="synonym">crcA</name>
    <name type="ordered locus">EPYR_02703</name>
</gene>
<keyword id="KW-0012">Acyltransferase</keyword>
<keyword id="KW-0998">Cell outer membrane</keyword>
<keyword id="KW-0449">Lipoprotein</keyword>
<keyword id="KW-0472">Membrane</keyword>
<keyword id="KW-0564">Palmitate</keyword>
<keyword id="KW-0732">Signal</keyword>
<keyword id="KW-0808">Transferase</keyword>
<comment type="function">
    <text evidence="1">Transfers a fatty acid residue from the sn-1 position of a phospholipid to the N-linked hydroxyfatty acid chain on the proximal unit of lipid A or its precursors.</text>
</comment>
<comment type="catalytic activity">
    <reaction evidence="1">
        <text>a lipid A + a 1,2-diacyl-sn-glycero-3-phosphocholine = a hepta-acyl lipid A + a 2-acyl-sn-glycero-3-phosphocholine</text>
        <dbReference type="Rhea" id="RHEA:74275"/>
        <dbReference type="ChEBI" id="CHEBI:57643"/>
        <dbReference type="ChEBI" id="CHEBI:57875"/>
        <dbReference type="ChEBI" id="CHEBI:193141"/>
        <dbReference type="ChEBI" id="CHEBI:193142"/>
        <dbReference type="EC" id="2.3.1.251"/>
    </reaction>
</comment>
<comment type="catalytic activity">
    <reaction evidence="1">
        <text>a lipid IVA + a 1,2-diacyl-sn-glycero-3-phosphocholine = a lipid IVB + a 2-acyl-sn-glycero-3-phosphocholine</text>
        <dbReference type="Rhea" id="RHEA:74279"/>
        <dbReference type="ChEBI" id="CHEBI:57643"/>
        <dbReference type="ChEBI" id="CHEBI:57875"/>
        <dbReference type="ChEBI" id="CHEBI:176425"/>
        <dbReference type="ChEBI" id="CHEBI:193143"/>
        <dbReference type="EC" id="2.3.1.251"/>
    </reaction>
</comment>
<comment type="catalytic activity">
    <reaction evidence="1">
        <text>a lipid IIA + a 1,2-diacyl-sn-glycero-3-phosphocholine = a lipid IIB + a 2-acyl-sn-glycero-3-phosphocholine</text>
        <dbReference type="Rhea" id="RHEA:74283"/>
        <dbReference type="ChEBI" id="CHEBI:57643"/>
        <dbReference type="ChEBI" id="CHEBI:57875"/>
        <dbReference type="ChEBI" id="CHEBI:193144"/>
        <dbReference type="ChEBI" id="CHEBI:193145"/>
        <dbReference type="EC" id="2.3.1.251"/>
    </reaction>
</comment>
<comment type="subunit">
    <text evidence="1">Homodimer.</text>
</comment>
<comment type="subcellular location">
    <subcellularLocation>
        <location evidence="1">Cell outer membrane</location>
        <topology evidence="1">Lipid-anchor</topology>
    </subcellularLocation>
</comment>
<comment type="similarity">
    <text evidence="1">Belongs to the lipid A palmitoyltransferase family.</text>
</comment>
<organism>
    <name type="scientific">Erwinia pyrifoliae (strain DSM 12163 / CIP 106111 / Ep16/96)</name>
    <dbReference type="NCBI Taxonomy" id="644651"/>
    <lineage>
        <taxon>Bacteria</taxon>
        <taxon>Pseudomonadati</taxon>
        <taxon>Pseudomonadota</taxon>
        <taxon>Gammaproteobacteria</taxon>
        <taxon>Enterobacterales</taxon>
        <taxon>Erwiniaceae</taxon>
        <taxon>Erwinia</taxon>
    </lineage>
</organism>
<reference key="1">
    <citation type="journal article" date="2010" name="BMC Genomics">
        <title>Complete genome sequence of the fire blight pathogen Erwinia pyrifoliae DSM 12163T and comparative genomic insights into plant pathogenicity.</title>
        <authorList>
            <person name="Smits T.H."/>
            <person name="Jaenicke S."/>
            <person name="Rezzonico F."/>
            <person name="Kamber T."/>
            <person name="Goesmann A."/>
            <person name="Frey J.E."/>
            <person name="Duffy B."/>
        </authorList>
    </citation>
    <scope>NUCLEOTIDE SEQUENCE [LARGE SCALE GENOMIC DNA]</scope>
    <source>
        <strain>DSM 12163 / CIP 106111 / Ep16/96</strain>
    </source>
</reference>
<sequence>MKLKPVLYLLMLLGCLGLKSAHAATLAHGISASWHSFSQTWNEPQTFDPYIPSIIWHNRWTYDADKIDKYNERPWGAGGGVSHFDKKGNWNGIYLMAFKDSFNKWELISGYGWEKTWRPLRDPDFHLGLGYTAGVTMRDNWSYIPIPVLLPLASIGYEYVSFQMTYIPGTYNNGNVYFAWLRWQL</sequence>
<evidence type="ECO:0000255" key="1">
    <source>
        <dbReference type="HAMAP-Rule" id="MF_00837"/>
    </source>
</evidence>
<dbReference type="EC" id="2.3.1.251" evidence="1"/>
<dbReference type="EMBL" id="FN392235">
    <property type="protein sequence ID" value="CAY75083.1"/>
    <property type="molecule type" value="Genomic_DNA"/>
</dbReference>
<dbReference type="RefSeq" id="WP_012668771.1">
    <property type="nucleotide sequence ID" value="NC_017390.1"/>
</dbReference>
<dbReference type="SMR" id="D2T3S6"/>
<dbReference type="GeneID" id="92236338"/>
<dbReference type="KEGG" id="epr:EPYR_02703"/>
<dbReference type="PATRIC" id="fig|644651.3.peg.2463"/>
<dbReference type="HOGENOM" id="CLU_104099_0_0_6"/>
<dbReference type="OrthoDB" id="9156803at2"/>
<dbReference type="GO" id="GO:0009279">
    <property type="term" value="C:cell outer membrane"/>
    <property type="evidence" value="ECO:0007669"/>
    <property type="project" value="UniProtKB-SubCell"/>
</dbReference>
<dbReference type="GO" id="GO:0016746">
    <property type="term" value="F:acyltransferase activity"/>
    <property type="evidence" value="ECO:0007669"/>
    <property type="project" value="UniProtKB-UniRule"/>
</dbReference>
<dbReference type="GO" id="GO:0009245">
    <property type="term" value="P:lipid A biosynthetic process"/>
    <property type="evidence" value="ECO:0007669"/>
    <property type="project" value="UniProtKB-UniRule"/>
</dbReference>
<dbReference type="FunFam" id="2.40.160.20:FF:000002">
    <property type="entry name" value="Lipid A palmitoyltransferase PagP"/>
    <property type="match status" value="1"/>
</dbReference>
<dbReference type="Gene3D" id="2.40.160.20">
    <property type="match status" value="1"/>
</dbReference>
<dbReference type="HAMAP" id="MF_00837">
    <property type="entry name" value="PagP_transferase"/>
    <property type="match status" value="1"/>
</dbReference>
<dbReference type="InterPro" id="IPR009746">
    <property type="entry name" value="LipidA_acyl_PagP"/>
</dbReference>
<dbReference type="InterPro" id="IPR011250">
    <property type="entry name" value="OMP/PagP_b-brl"/>
</dbReference>
<dbReference type="NCBIfam" id="NF008271">
    <property type="entry name" value="PRK11045.1"/>
    <property type="match status" value="1"/>
</dbReference>
<dbReference type="Pfam" id="PF07017">
    <property type="entry name" value="PagP"/>
    <property type="match status" value="1"/>
</dbReference>
<dbReference type="SUPFAM" id="SSF56925">
    <property type="entry name" value="OMPA-like"/>
    <property type="match status" value="1"/>
</dbReference>
<dbReference type="PROSITE" id="PS51257">
    <property type="entry name" value="PROKAR_LIPOPROTEIN"/>
    <property type="match status" value="1"/>
</dbReference>
<feature type="signal peptide" evidence="1">
    <location>
        <begin position="1"/>
        <end position="14"/>
    </location>
</feature>
<feature type="chain" id="PRO_0000414445" description="Lipid A acyltransferase PagP">
    <location>
        <begin position="15"/>
        <end position="185"/>
    </location>
</feature>
<feature type="active site" evidence="1">
    <location>
        <position position="57"/>
    </location>
</feature>
<feature type="active site" evidence="1">
    <location>
        <position position="100"/>
    </location>
</feature>
<feature type="active site" evidence="1">
    <location>
        <position position="101"/>
    </location>
</feature>
<feature type="site" description="Role in lipopolysaccharide recognition" evidence="1">
    <location>
        <position position="66"/>
    </location>
</feature>
<feature type="site" description="Role in the phospholipid gating" evidence="1">
    <location>
        <position position="171"/>
    </location>
</feature>
<feature type="lipid moiety-binding region" description="N-palmitoyl cysteine" evidence="1">
    <location>
        <position position="15"/>
    </location>
</feature>
<feature type="lipid moiety-binding region" description="S-diacylglycerol cysteine" evidence="1">
    <location>
        <position position="15"/>
    </location>
</feature>
<protein>
    <recommendedName>
        <fullName evidence="1">Lipid A acyltransferase PagP</fullName>
        <ecNumber evidence="1">2.3.1.251</ecNumber>
    </recommendedName>
    <alternativeName>
        <fullName evidence="1">Lipid A acylation protein</fullName>
    </alternativeName>
</protein>
<name>PAGP_ERWP6</name>
<accession>D2T3S6</accession>